<comment type="interaction">
    <interactant intactId="EBI-9917523">
        <id>Q8NB25</id>
    </interactant>
    <interactant intactId="EBI-348399">
        <id>P22607</id>
        <label>FGFR3</label>
    </interactant>
    <organismsDiffer>false</organismsDiffer>
    <experiments>3</experiments>
</comment>
<comment type="interaction">
    <interactant intactId="EBI-9917523">
        <id>Q8NB25</id>
    </interactant>
    <interactant intactId="EBI-351506">
        <id>P06396</id>
        <label>GSN</label>
    </interactant>
    <organismsDiffer>false</organismsDiffer>
    <experiments>3</experiments>
</comment>
<comment type="interaction">
    <interactant intactId="EBI-9917523">
        <id>Q8NB25</id>
    </interactant>
    <interactant intactId="EBI-350145">
        <id>P01112</id>
        <label>HRAS</label>
    </interactant>
    <organismsDiffer>false</organismsDiffer>
    <experiments>3</experiments>
</comment>
<comment type="interaction">
    <interactant intactId="EBI-9917523">
        <id>Q8NB25</id>
    </interactant>
    <interactant intactId="EBI-1105153">
        <id>Q96KQ4</id>
        <label>PPP1R13B</label>
    </interactant>
    <organismsDiffer>false</organismsDiffer>
    <experiments>3</experiments>
</comment>
<comment type="interaction">
    <interactant intactId="EBI-9917523">
        <id>Q8NB25</id>
    </interactant>
    <interactant intactId="EBI-741480">
        <id>Q9UMX0</id>
        <label>UBQLN1</label>
    </interactant>
    <organismsDiffer>false</organismsDiffer>
    <experiments>3</experiments>
</comment>
<comment type="subcellular location">
    <subcellularLocation>
        <location evidence="3">Cytoplasm</location>
        <location evidence="3">P-body</location>
    </subcellularLocation>
    <subcellularLocation>
        <location>Cytoplasm</location>
        <location>Cytoskeleton</location>
        <location>Microtubule organizing center</location>
        <location>Centrosome</location>
        <location>Centriolar satellite</location>
    </subcellularLocation>
    <text evidence="3">Localizes to cytoplasmic foci in both interphase and mitotic cells.</text>
</comment>
<comment type="alternative products">
    <event type="alternative splicing"/>
    <isoform>
        <id>Q8NB25-1</id>
        <name>1</name>
        <sequence type="displayed"/>
    </isoform>
    <isoform>
        <id>Q8NB25-2</id>
        <name>2</name>
        <sequence type="described" ref="VSP_007446 VSP_007447"/>
    </isoform>
    <isoform>
        <id>Q8NB25-3</id>
        <name>3</name>
        <sequence type="described" ref="VSP_039102 VSP_039103"/>
    </isoform>
    <isoform>
        <id>Q8NB25-4</id>
        <name>4</name>
        <sequence type="described" ref="VSP_044520 VSP_007446"/>
    </isoform>
</comment>
<comment type="similarity">
    <text evidence="7">Belongs to the FAM184 family.</text>
</comment>
<comment type="sequence caution" evidence="7">
    <conflict type="erroneous initiation">
        <sequence resource="EMBL-CDS" id="BAB14769"/>
    </conflict>
    <text>Truncated N-terminus.</text>
</comment>
<comment type="sequence caution" evidence="7">
    <conflict type="erroneous initiation">
        <sequence resource="EMBL-CDS" id="BAC03719"/>
    </conflict>
    <text>Truncated N-terminus.</text>
</comment>
<feature type="chain" id="PRO_0000089512" description="Protein FAM184A">
    <location>
        <begin position="1"/>
        <end position="1140"/>
    </location>
</feature>
<feature type="region of interest" description="Disordered" evidence="2">
    <location>
        <begin position="1063"/>
        <end position="1128"/>
    </location>
</feature>
<feature type="coiled-coil region" evidence="1">
    <location>
        <begin position="57"/>
        <end position="256"/>
    </location>
</feature>
<feature type="coiled-coil region" evidence="1">
    <location>
        <begin position="296"/>
        <end position="800"/>
    </location>
</feature>
<feature type="coiled-coil region" evidence="1">
    <location>
        <begin position="868"/>
        <end position="907"/>
    </location>
</feature>
<feature type="splice variant" id="VSP_044520" description="In isoform 4." evidence="6">
    <location>
        <begin position="1"/>
        <end position="120"/>
    </location>
</feature>
<feature type="splice variant" id="VSP_007446" description="In isoform 2 and isoform 4." evidence="5 6">
    <location>
        <begin position="924"/>
        <end position="972"/>
    </location>
</feature>
<feature type="splice variant" id="VSP_007447" description="In isoform 2." evidence="5">
    <location>
        <begin position="1012"/>
        <end position="1046"/>
    </location>
</feature>
<feature type="splice variant" id="VSP_039102" description="In isoform 3." evidence="4">
    <original>SPA</original>
    <variation>RYQ</variation>
    <location>
        <begin position="1114"/>
        <end position="1116"/>
    </location>
</feature>
<feature type="splice variant" id="VSP_039103" description="In isoform 3." evidence="4">
    <location>
        <begin position="1117"/>
        <end position="1140"/>
    </location>
</feature>
<feature type="sequence variant" id="VAR_054101" description="In dbSNP:rs34681930.">
    <original>Q</original>
    <variation>H</variation>
    <location>
        <position position="174"/>
    </location>
</feature>
<feature type="sequence variant" id="VAR_054102" description="In dbSNP:rs34977570.">
    <original>V</original>
    <variation>G</variation>
    <location>
        <position position="177"/>
    </location>
</feature>
<feature type="sequence variant" id="VAR_054103" description="In dbSNP:rs17827619.">
    <original>D</original>
    <variation>N</variation>
    <location>
        <position position="599"/>
    </location>
</feature>
<feature type="sequence conflict" description="In Ref. 1; CAD98058." evidence="7" ref="1">
    <original>N</original>
    <variation>D</variation>
    <location>
        <position position="546"/>
    </location>
</feature>
<feature type="sequence conflict" description="In Ref. 4; BAC03719." evidence="7" ref="4">
    <location>
        <position position="620"/>
    </location>
</feature>
<feature type="sequence conflict" description="In Ref. 4; BAC03719." evidence="7" ref="4">
    <original>Q</original>
    <variation>R</variation>
    <location>
        <position position="739"/>
    </location>
</feature>
<feature type="sequence conflict" description="In Ref. 1; CAD98058." evidence="7" ref="1">
    <original>F</original>
    <variation>L</variation>
    <location>
        <position position="795"/>
    </location>
</feature>
<feature type="sequence conflict" description="In Ref. 1; CAD98058." evidence="7" ref="1">
    <original>H</original>
    <variation>R</variation>
    <location>
        <position position="882"/>
    </location>
</feature>
<proteinExistence type="evidence at protein level"/>
<organism>
    <name type="scientific">Homo sapiens</name>
    <name type="common">Human</name>
    <dbReference type="NCBI Taxonomy" id="9606"/>
    <lineage>
        <taxon>Eukaryota</taxon>
        <taxon>Metazoa</taxon>
        <taxon>Chordata</taxon>
        <taxon>Craniata</taxon>
        <taxon>Vertebrata</taxon>
        <taxon>Euteleostomi</taxon>
        <taxon>Mammalia</taxon>
        <taxon>Eutheria</taxon>
        <taxon>Euarchontoglires</taxon>
        <taxon>Primates</taxon>
        <taxon>Haplorrhini</taxon>
        <taxon>Catarrhini</taxon>
        <taxon>Hominidae</taxon>
        <taxon>Homo</taxon>
    </lineage>
</organism>
<reference key="1">
    <citation type="journal article" date="2007" name="BMC Genomics">
        <title>The full-ORF clone resource of the German cDNA consortium.</title>
        <authorList>
            <person name="Bechtel S."/>
            <person name="Rosenfelder H."/>
            <person name="Duda A."/>
            <person name="Schmidt C.P."/>
            <person name="Ernst U."/>
            <person name="Wellenreuther R."/>
            <person name="Mehrle A."/>
            <person name="Schuster C."/>
            <person name="Bahr A."/>
            <person name="Bloecker H."/>
            <person name="Heubner D."/>
            <person name="Hoerlein A."/>
            <person name="Michel G."/>
            <person name="Wedler H."/>
            <person name="Koehrer K."/>
            <person name="Ottenwaelder B."/>
            <person name="Poustka A."/>
            <person name="Wiemann S."/>
            <person name="Schupp I."/>
        </authorList>
    </citation>
    <scope>NUCLEOTIDE SEQUENCE [LARGE SCALE MRNA] (ISOFORM 4)</scope>
    <source>
        <tissue>Fetal brain</tissue>
    </source>
</reference>
<reference key="2">
    <citation type="journal article" date="2003" name="Nature">
        <title>The DNA sequence and analysis of human chromosome 6.</title>
        <authorList>
            <person name="Mungall A.J."/>
            <person name="Palmer S.A."/>
            <person name="Sims S.K."/>
            <person name="Edwards C.A."/>
            <person name="Ashurst J.L."/>
            <person name="Wilming L."/>
            <person name="Jones M.C."/>
            <person name="Horton R."/>
            <person name="Hunt S.E."/>
            <person name="Scott C.E."/>
            <person name="Gilbert J.G.R."/>
            <person name="Clamp M.E."/>
            <person name="Bethel G."/>
            <person name="Milne S."/>
            <person name="Ainscough R."/>
            <person name="Almeida J.P."/>
            <person name="Ambrose K.D."/>
            <person name="Andrews T.D."/>
            <person name="Ashwell R.I.S."/>
            <person name="Babbage A.K."/>
            <person name="Bagguley C.L."/>
            <person name="Bailey J."/>
            <person name="Banerjee R."/>
            <person name="Barker D.J."/>
            <person name="Barlow K.F."/>
            <person name="Bates K."/>
            <person name="Beare D.M."/>
            <person name="Beasley H."/>
            <person name="Beasley O."/>
            <person name="Bird C.P."/>
            <person name="Blakey S.E."/>
            <person name="Bray-Allen S."/>
            <person name="Brook J."/>
            <person name="Brown A.J."/>
            <person name="Brown J.Y."/>
            <person name="Burford D.C."/>
            <person name="Burrill W."/>
            <person name="Burton J."/>
            <person name="Carder C."/>
            <person name="Carter N.P."/>
            <person name="Chapman J.C."/>
            <person name="Clark S.Y."/>
            <person name="Clark G."/>
            <person name="Clee C.M."/>
            <person name="Clegg S."/>
            <person name="Cobley V."/>
            <person name="Collier R.E."/>
            <person name="Collins J.E."/>
            <person name="Colman L.K."/>
            <person name="Corby N.R."/>
            <person name="Coville G.J."/>
            <person name="Culley K.M."/>
            <person name="Dhami P."/>
            <person name="Davies J."/>
            <person name="Dunn M."/>
            <person name="Earthrowl M.E."/>
            <person name="Ellington A.E."/>
            <person name="Evans K.A."/>
            <person name="Faulkner L."/>
            <person name="Francis M.D."/>
            <person name="Frankish A."/>
            <person name="Frankland J."/>
            <person name="French L."/>
            <person name="Garner P."/>
            <person name="Garnett J."/>
            <person name="Ghori M.J."/>
            <person name="Gilby L.M."/>
            <person name="Gillson C.J."/>
            <person name="Glithero R.J."/>
            <person name="Grafham D.V."/>
            <person name="Grant M."/>
            <person name="Gribble S."/>
            <person name="Griffiths C."/>
            <person name="Griffiths M.N.D."/>
            <person name="Hall R."/>
            <person name="Halls K.S."/>
            <person name="Hammond S."/>
            <person name="Harley J.L."/>
            <person name="Hart E.A."/>
            <person name="Heath P.D."/>
            <person name="Heathcott R."/>
            <person name="Holmes S.J."/>
            <person name="Howden P.J."/>
            <person name="Howe K.L."/>
            <person name="Howell G.R."/>
            <person name="Huckle E."/>
            <person name="Humphray S.J."/>
            <person name="Humphries M.D."/>
            <person name="Hunt A.R."/>
            <person name="Johnson C.M."/>
            <person name="Joy A.A."/>
            <person name="Kay M."/>
            <person name="Keenan S.J."/>
            <person name="Kimberley A.M."/>
            <person name="King A."/>
            <person name="Laird G.K."/>
            <person name="Langford C."/>
            <person name="Lawlor S."/>
            <person name="Leongamornlert D.A."/>
            <person name="Leversha M."/>
            <person name="Lloyd C.R."/>
            <person name="Lloyd D.M."/>
            <person name="Loveland J.E."/>
            <person name="Lovell J."/>
            <person name="Martin S."/>
            <person name="Mashreghi-Mohammadi M."/>
            <person name="Maslen G.L."/>
            <person name="Matthews L."/>
            <person name="McCann O.T."/>
            <person name="McLaren S.J."/>
            <person name="McLay K."/>
            <person name="McMurray A."/>
            <person name="Moore M.J.F."/>
            <person name="Mullikin J.C."/>
            <person name="Niblett D."/>
            <person name="Nickerson T."/>
            <person name="Novik K.L."/>
            <person name="Oliver K."/>
            <person name="Overton-Larty E.K."/>
            <person name="Parker A."/>
            <person name="Patel R."/>
            <person name="Pearce A.V."/>
            <person name="Peck A.I."/>
            <person name="Phillimore B.J.C.T."/>
            <person name="Phillips S."/>
            <person name="Plumb R.W."/>
            <person name="Porter K.M."/>
            <person name="Ramsey Y."/>
            <person name="Ranby S.A."/>
            <person name="Rice C.M."/>
            <person name="Ross M.T."/>
            <person name="Searle S.M."/>
            <person name="Sehra H.K."/>
            <person name="Sheridan E."/>
            <person name="Skuce C.D."/>
            <person name="Smith S."/>
            <person name="Smith M."/>
            <person name="Spraggon L."/>
            <person name="Squares S.L."/>
            <person name="Steward C.A."/>
            <person name="Sycamore N."/>
            <person name="Tamlyn-Hall G."/>
            <person name="Tester J."/>
            <person name="Theaker A.J."/>
            <person name="Thomas D.W."/>
            <person name="Thorpe A."/>
            <person name="Tracey A."/>
            <person name="Tromans A."/>
            <person name="Tubby B."/>
            <person name="Wall M."/>
            <person name="Wallis J.M."/>
            <person name="West A.P."/>
            <person name="White S.S."/>
            <person name="Whitehead S.L."/>
            <person name="Whittaker H."/>
            <person name="Wild A."/>
            <person name="Willey D.J."/>
            <person name="Wilmer T.E."/>
            <person name="Wood J.M."/>
            <person name="Wray P.W."/>
            <person name="Wyatt J.C."/>
            <person name="Young L."/>
            <person name="Younger R.M."/>
            <person name="Bentley D.R."/>
            <person name="Coulson A."/>
            <person name="Durbin R.M."/>
            <person name="Hubbard T."/>
            <person name="Sulston J.E."/>
            <person name="Dunham I."/>
            <person name="Rogers J."/>
            <person name="Beck S."/>
        </authorList>
    </citation>
    <scope>NUCLEOTIDE SEQUENCE [LARGE SCALE GENOMIC DNA]</scope>
</reference>
<reference key="3">
    <citation type="submission" date="2005-09" db="EMBL/GenBank/DDBJ databases">
        <authorList>
            <person name="Mural R.J."/>
            <person name="Istrail S."/>
            <person name="Sutton G.G."/>
            <person name="Florea L."/>
            <person name="Halpern A.L."/>
            <person name="Mobarry C.M."/>
            <person name="Lippert R."/>
            <person name="Walenz B."/>
            <person name="Shatkay H."/>
            <person name="Dew I."/>
            <person name="Miller J.R."/>
            <person name="Flanigan M.J."/>
            <person name="Edwards N.J."/>
            <person name="Bolanos R."/>
            <person name="Fasulo D."/>
            <person name="Halldorsson B.V."/>
            <person name="Hannenhalli S."/>
            <person name="Turner R."/>
            <person name="Yooseph S."/>
            <person name="Lu F."/>
            <person name="Nusskern D.R."/>
            <person name="Shue B.C."/>
            <person name="Zheng X.H."/>
            <person name="Zhong F."/>
            <person name="Delcher A.L."/>
            <person name="Huson D.H."/>
            <person name="Kravitz S.A."/>
            <person name="Mouchard L."/>
            <person name="Reinert K."/>
            <person name="Remington K.A."/>
            <person name="Clark A.G."/>
            <person name="Waterman M.S."/>
            <person name="Eichler E.E."/>
            <person name="Adams M.D."/>
            <person name="Hunkapiller M.W."/>
            <person name="Myers E.W."/>
            <person name="Venter J.C."/>
        </authorList>
    </citation>
    <scope>NUCLEOTIDE SEQUENCE [LARGE SCALE GENOMIC DNA]</scope>
</reference>
<reference key="4">
    <citation type="journal article" date="2004" name="Nat. Genet.">
        <title>Complete sequencing and characterization of 21,243 full-length human cDNAs.</title>
        <authorList>
            <person name="Ota T."/>
            <person name="Suzuki Y."/>
            <person name="Nishikawa T."/>
            <person name="Otsuki T."/>
            <person name="Sugiyama T."/>
            <person name="Irie R."/>
            <person name="Wakamatsu A."/>
            <person name="Hayashi K."/>
            <person name="Sato H."/>
            <person name="Nagai K."/>
            <person name="Kimura K."/>
            <person name="Makita H."/>
            <person name="Sekine M."/>
            <person name="Obayashi M."/>
            <person name="Nishi T."/>
            <person name="Shibahara T."/>
            <person name="Tanaka T."/>
            <person name="Ishii S."/>
            <person name="Yamamoto J."/>
            <person name="Saito K."/>
            <person name="Kawai Y."/>
            <person name="Isono Y."/>
            <person name="Nakamura Y."/>
            <person name="Nagahari K."/>
            <person name="Murakami K."/>
            <person name="Yasuda T."/>
            <person name="Iwayanagi T."/>
            <person name="Wagatsuma M."/>
            <person name="Shiratori A."/>
            <person name="Sudo H."/>
            <person name="Hosoiri T."/>
            <person name="Kaku Y."/>
            <person name="Kodaira H."/>
            <person name="Kondo H."/>
            <person name="Sugawara M."/>
            <person name="Takahashi M."/>
            <person name="Kanda K."/>
            <person name="Yokoi T."/>
            <person name="Furuya T."/>
            <person name="Kikkawa E."/>
            <person name="Omura Y."/>
            <person name="Abe K."/>
            <person name="Kamihara K."/>
            <person name="Katsuta N."/>
            <person name="Sato K."/>
            <person name="Tanikawa M."/>
            <person name="Yamazaki M."/>
            <person name="Ninomiya K."/>
            <person name="Ishibashi T."/>
            <person name="Yamashita H."/>
            <person name="Murakawa K."/>
            <person name="Fujimori K."/>
            <person name="Tanai H."/>
            <person name="Kimata M."/>
            <person name="Watanabe M."/>
            <person name="Hiraoka S."/>
            <person name="Chiba Y."/>
            <person name="Ishida S."/>
            <person name="Ono Y."/>
            <person name="Takiguchi S."/>
            <person name="Watanabe S."/>
            <person name="Yosida M."/>
            <person name="Hotuta T."/>
            <person name="Kusano J."/>
            <person name="Kanehori K."/>
            <person name="Takahashi-Fujii A."/>
            <person name="Hara H."/>
            <person name="Tanase T.-O."/>
            <person name="Nomura Y."/>
            <person name="Togiya S."/>
            <person name="Komai F."/>
            <person name="Hara R."/>
            <person name="Takeuchi K."/>
            <person name="Arita M."/>
            <person name="Imose N."/>
            <person name="Musashino K."/>
            <person name="Yuuki H."/>
            <person name="Oshima A."/>
            <person name="Sasaki N."/>
            <person name="Aotsuka S."/>
            <person name="Yoshikawa Y."/>
            <person name="Matsunawa H."/>
            <person name="Ichihara T."/>
            <person name="Shiohata N."/>
            <person name="Sano S."/>
            <person name="Moriya S."/>
            <person name="Momiyama H."/>
            <person name="Satoh N."/>
            <person name="Takami S."/>
            <person name="Terashima Y."/>
            <person name="Suzuki O."/>
            <person name="Nakagawa S."/>
            <person name="Senoh A."/>
            <person name="Mizoguchi H."/>
            <person name="Goto Y."/>
            <person name="Shimizu F."/>
            <person name="Wakebe H."/>
            <person name="Hishigaki H."/>
            <person name="Watanabe T."/>
            <person name="Sugiyama A."/>
            <person name="Takemoto M."/>
            <person name="Kawakami B."/>
            <person name="Yamazaki M."/>
            <person name="Watanabe K."/>
            <person name="Kumagai A."/>
            <person name="Itakura S."/>
            <person name="Fukuzumi Y."/>
            <person name="Fujimori Y."/>
            <person name="Komiyama M."/>
            <person name="Tashiro H."/>
            <person name="Tanigami A."/>
            <person name="Fujiwara T."/>
            <person name="Ono T."/>
            <person name="Yamada K."/>
            <person name="Fujii Y."/>
            <person name="Ozaki K."/>
            <person name="Hirao M."/>
            <person name="Ohmori Y."/>
            <person name="Kawabata A."/>
            <person name="Hikiji T."/>
            <person name="Kobatake N."/>
            <person name="Inagaki H."/>
            <person name="Ikema Y."/>
            <person name="Okamoto S."/>
            <person name="Okitani R."/>
            <person name="Kawakami T."/>
            <person name="Noguchi S."/>
            <person name="Itoh T."/>
            <person name="Shigeta K."/>
            <person name="Senba T."/>
            <person name="Matsumura K."/>
            <person name="Nakajima Y."/>
            <person name="Mizuno T."/>
            <person name="Morinaga M."/>
            <person name="Sasaki M."/>
            <person name="Togashi T."/>
            <person name="Oyama M."/>
            <person name="Hata H."/>
            <person name="Watanabe M."/>
            <person name="Komatsu T."/>
            <person name="Mizushima-Sugano J."/>
            <person name="Satoh T."/>
            <person name="Shirai Y."/>
            <person name="Takahashi Y."/>
            <person name="Nakagawa K."/>
            <person name="Okumura K."/>
            <person name="Nagase T."/>
            <person name="Nomura N."/>
            <person name="Kikuchi H."/>
            <person name="Masuho Y."/>
            <person name="Yamashita R."/>
            <person name="Nakai K."/>
            <person name="Yada T."/>
            <person name="Nakamura Y."/>
            <person name="Ohara O."/>
            <person name="Isogai T."/>
            <person name="Sugano S."/>
        </authorList>
    </citation>
    <scope>NUCLEOTIDE SEQUENCE [LARGE SCALE MRNA] OF 54-1140 (ISOFORM 2)</scope>
    <scope>NUCLEOTIDE SEQUENCE [LARGE SCALE MRNA] OF 617-1140 (ISOFORM 1)</scope>
    <source>
        <tissue>Brain</tissue>
    </source>
</reference>
<reference key="5">
    <citation type="journal article" date="2004" name="Genome Res.">
        <title>The status, quality, and expansion of the NIH full-length cDNA project: the Mammalian Gene Collection (MGC).</title>
        <authorList>
            <consortium name="The MGC Project Team"/>
        </authorList>
    </citation>
    <scope>NUCLEOTIDE SEQUENCE [LARGE SCALE MRNA] OF 688-1140 (ISOFORM 1)</scope>
    <source>
        <tissue>Eye</tissue>
    </source>
</reference>
<reference key="6">
    <citation type="journal article" date="2001" name="Genome Res.">
        <title>Towards a catalog of human genes and proteins: sequencing and analysis of 500 novel complete protein coding human cDNAs.</title>
        <authorList>
            <person name="Wiemann S."/>
            <person name="Weil B."/>
            <person name="Wellenreuther R."/>
            <person name="Gassenhuber J."/>
            <person name="Glassl S."/>
            <person name="Ansorge W."/>
            <person name="Boecher M."/>
            <person name="Bloecker H."/>
            <person name="Bauersachs S."/>
            <person name="Blum H."/>
            <person name="Lauber J."/>
            <person name="Duesterhoeft A."/>
            <person name="Beyer A."/>
            <person name="Koehrer K."/>
            <person name="Strack N."/>
            <person name="Mewes H.-W."/>
            <person name="Ottenwaelder B."/>
            <person name="Obermaier B."/>
            <person name="Tampe J."/>
            <person name="Heubner D."/>
            <person name="Wambutt R."/>
            <person name="Korn B."/>
            <person name="Klein M."/>
            <person name="Poustka A."/>
        </authorList>
    </citation>
    <scope>NUCLEOTIDE SEQUENCE [LARGE SCALE MRNA] OF 847-1140 (ISOFORM 3)</scope>
    <source>
        <tissue>Testis</tissue>
    </source>
</reference>
<reference key="7">
    <citation type="journal article" date="2021" name="Mol. Cell">
        <title>Comprehensive interactome profiling of the human Hsp70 network highlights functional differentiation of J domains.</title>
        <authorList>
            <person name="Piette B.L."/>
            <person name="Alerasool N."/>
            <person name="Lin Z.Y."/>
            <person name="Lacoste J."/>
            <person name="Lam M.H.Y."/>
            <person name="Qian W.W."/>
            <person name="Tran S."/>
            <person name="Larsen B."/>
            <person name="Campos E."/>
            <person name="Peng J."/>
            <person name="Gingras A.C."/>
            <person name="Taipale M."/>
        </authorList>
    </citation>
    <scope>SUBCELLULAR LOCATION</scope>
</reference>
<name>F184A_HUMAN</name>
<protein>
    <recommendedName>
        <fullName evidence="7">Protein FAM184A</fullName>
    </recommendedName>
</protein>
<sequence>MATPGMSWQQHYYGGSAAKFAPSPATAQLAGHSMDYSQEMHLKMSKKIAQLTKVIYALNTKNDEHESAIQALKDAHEEEIQQILAETREKILQYKSKVTEELDLRRKIQVLESSLEDHIKMKQQALTEFEAYKHRVEDMQLCAEAQHVQRIVTMSREVEEIRRKFEEKLRSFGQLQVQFEKDKRLALEDLQAAHRREIQELLKSQQDHSASVNKGQEKAEELHRMEVESLNKMLEELRLERKKLIEDYEGKLNKAQSFYERELDTLKRSQLFTAESLQASKEKEADLRKEFQGQEAILRKTIGKLKTELQMVQDEAGSLLDKCQKLQTALAIAENNVQVLQKQLDDAKEGEMALLSKHKEVESELAAARERLQQQASDLVLKASHIGMLQATQMTQEVTIKDLESEKSRVNERLSQLEEERAFLRSKTQSLDEEQKQQILELEKKVNEAKRTQQEYYERELKNLQSRLEEEVTQLNEAHSKTLEELAWKHHMAIEAVHSNAIRDKKKLQMDLEEQHNKDKLNLEEDKNQLQQELENLKEVLEDKLNTANQEIGHLQDMVRKSEQGLGSAEGLIASLQDSQERLQNELDLTKDSLKETKDALLNVEGELEQERQQHEETIAAMKEEEKLKVDKMAHDLEIKWTENLRQECSKLREELRLQHEEDKKSAMSQLLQLKDREKNAARDSWQKKVEDLLNQISLLKQNLEIQLSQSQTSLQQLQAQFTQERQRLTQELEELEEQHQQRHKSLKEAHVLAFQTMEEEKEKEQRALENHLQQKHSAELQSLKDAHRESMEGFRIEMEQELQTLRFELEDEGKAMLASLRSELNHQHAAAIDLLRHNHHQELAAAKMELERSIDISRRQSKEHICRITDLQEELRHREHHISELDKEVQHLHENISALTKELEFKGKEILRIRSESNQQIRLHEQDLNKRLEKELDVMTADHLREKNIMRADFNKTNELLKEINAALQVSLEEMEEKYLMRESKPEDIQMITELKAMLTERDQIIKKLIEDNKFYQLELVNRETNFNKVFNSSPTVGVINPLAKQKKKNDKSPTNRFVSVPNLSALESGGVGNGHPNRLDPIPNSPVHDIEFNSSKPLPQPVPPKGPKTFLSPAQSEASPVASPDPQRQEWFARYFTF</sequence>
<accession>Q8NB25</accession>
<accession>B9DI75</accession>
<accession>F8W8D6</accession>
<accession>Q5TBS9</accession>
<accession>Q7Z323</accession>
<accession>Q96GY8</accession>
<accession>Q9H0J8</accession>
<accession>Q9H851</accession>
<evidence type="ECO:0000255" key="1"/>
<evidence type="ECO:0000256" key="2">
    <source>
        <dbReference type="SAM" id="MobiDB-lite"/>
    </source>
</evidence>
<evidence type="ECO:0000269" key="3">
    <source>
    </source>
</evidence>
<evidence type="ECO:0000303" key="4">
    <source>
    </source>
</evidence>
<evidence type="ECO:0000303" key="5">
    <source>
    </source>
</evidence>
<evidence type="ECO:0000303" key="6">
    <source>
    </source>
</evidence>
<evidence type="ECO:0000305" key="7"/>
<evidence type="ECO:0000312" key="8">
    <source>
        <dbReference type="HGNC" id="HGNC:20991"/>
    </source>
</evidence>
<gene>
    <name evidence="8" type="primary">FAM184A</name>
    <name type="synonym">C6orf60</name>
</gene>
<keyword id="KW-0025">Alternative splicing</keyword>
<keyword id="KW-0175">Coiled coil</keyword>
<keyword id="KW-0963">Cytoplasm</keyword>
<keyword id="KW-0206">Cytoskeleton</keyword>
<keyword id="KW-1267">Proteomics identification</keyword>
<keyword id="KW-1185">Reference proteome</keyword>
<dbReference type="EMBL" id="BX538186">
    <property type="protein sequence ID" value="CAD98058.1"/>
    <property type="molecule type" value="mRNA"/>
</dbReference>
<dbReference type="EMBL" id="AL132874">
    <property type="status" value="NOT_ANNOTATED_CDS"/>
    <property type="molecule type" value="Genomic_DNA"/>
</dbReference>
<dbReference type="EMBL" id="AL137009">
    <property type="status" value="NOT_ANNOTATED_CDS"/>
    <property type="molecule type" value="Genomic_DNA"/>
</dbReference>
<dbReference type="EMBL" id="AL365275">
    <property type="status" value="NOT_ANNOTATED_CDS"/>
    <property type="molecule type" value="Genomic_DNA"/>
</dbReference>
<dbReference type="EMBL" id="CH471051">
    <property type="protein sequence ID" value="EAW48188.1"/>
    <property type="molecule type" value="Genomic_DNA"/>
</dbReference>
<dbReference type="EMBL" id="AK024004">
    <property type="protein sequence ID" value="BAB14769.1"/>
    <property type="status" value="ALT_INIT"/>
    <property type="molecule type" value="mRNA"/>
</dbReference>
<dbReference type="EMBL" id="AK091682">
    <property type="protein sequence ID" value="BAC03719.1"/>
    <property type="status" value="ALT_INIT"/>
    <property type="molecule type" value="mRNA"/>
</dbReference>
<dbReference type="EMBL" id="BC009055">
    <property type="protein sequence ID" value="AAH09055.2"/>
    <property type="molecule type" value="mRNA"/>
</dbReference>
<dbReference type="EMBL" id="AL136767">
    <property type="protein sequence ID" value="CAB66701.1"/>
    <property type="molecule type" value="mRNA"/>
</dbReference>
<dbReference type="CCDS" id="CCDS43499.1">
    <molecule id="Q8NB25-1"/>
</dbReference>
<dbReference type="CCDS" id="CCDS43500.1">
    <molecule id="Q8NB25-4"/>
</dbReference>
<dbReference type="RefSeq" id="NP_001093881.1">
    <molecule id="Q8NB25-4"/>
    <property type="nucleotide sequence ID" value="NM_001100411.3"/>
</dbReference>
<dbReference type="RefSeq" id="NP_001275505.1">
    <property type="nucleotide sequence ID" value="NM_001288576.1"/>
</dbReference>
<dbReference type="RefSeq" id="NP_078857.5">
    <molecule id="Q8NB25-1"/>
    <property type="nucleotide sequence ID" value="NM_024581.5"/>
</dbReference>
<dbReference type="SMR" id="Q8NB25"/>
<dbReference type="BioGRID" id="122762">
    <property type="interactions" value="69"/>
</dbReference>
<dbReference type="FunCoup" id="Q8NB25">
    <property type="interactions" value="106"/>
</dbReference>
<dbReference type="IntAct" id="Q8NB25">
    <property type="interactions" value="26"/>
</dbReference>
<dbReference type="MINT" id="Q8NB25"/>
<dbReference type="STRING" id="9606.ENSP00000342604"/>
<dbReference type="GlyGen" id="Q8NB25">
    <property type="glycosylation" value="3 sites, 1 O-linked glycan (1 site)"/>
</dbReference>
<dbReference type="iPTMnet" id="Q8NB25"/>
<dbReference type="PhosphoSitePlus" id="Q8NB25"/>
<dbReference type="SwissPalm" id="Q8NB25"/>
<dbReference type="BioMuta" id="FAM184A"/>
<dbReference type="DMDM" id="209572754"/>
<dbReference type="jPOST" id="Q8NB25"/>
<dbReference type="MassIVE" id="Q8NB25"/>
<dbReference type="PaxDb" id="9606-ENSP00000342604"/>
<dbReference type="PeptideAtlas" id="Q8NB25"/>
<dbReference type="ProteomicsDB" id="30129"/>
<dbReference type="ProteomicsDB" id="72720">
    <molecule id="Q8NB25-1"/>
</dbReference>
<dbReference type="ProteomicsDB" id="72721">
    <molecule id="Q8NB25-2"/>
</dbReference>
<dbReference type="ProteomicsDB" id="72722">
    <molecule id="Q8NB25-3"/>
</dbReference>
<dbReference type="Pumba" id="Q8NB25"/>
<dbReference type="Antibodypedia" id="32589">
    <property type="antibodies" value="27 antibodies from 9 providers"/>
</dbReference>
<dbReference type="DNASU" id="79632"/>
<dbReference type="Ensembl" id="ENST00000338891.12">
    <molecule id="Q8NB25-1"/>
    <property type="protein sequence ID" value="ENSP00000342604.7"/>
    <property type="gene ID" value="ENSG00000111879.20"/>
</dbReference>
<dbReference type="Ensembl" id="ENST00000352896.9">
    <molecule id="Q8NB25-4"/>
    <property type="protein sequence ID" value="ENSP00000326608.6"/>
    <property type="gene ID" value="ENSG00000111879.20"/>
</dbReference>
<dbReference type="Ensembl" id="ENST00000521531.5">
    <molecule id="Q8NB25-2"/>
    <property type="protein sequence ID" value="ENSP00000430442.1"/>
    <property type="gene ID" value="ENSG00000111879.20"/>
</dbReference>
<dbReference type="GeneID" id="79632"/>
<dbReference type="KEGG" id="hsa:79632"/>
<dbReference type="MANE-Select" id="ENST00000338891.12">
    <property type="protein sequence ID" value="ENSP00000342604.7"/>
    <property type="RefSeq nucleotide sequence ID" value="NM_024581.6"/>
    <property type="RefSeq protein sequence ID" value="NP_078857.5"/>
</dbReference>
<dbReference type="UCSC" id="uc003pyj.5">
    <molecule id="Q8NB25-1"/>
    <property type="organism name" value="human"/>
</dbReference>
<dbReference type="AGR" id="HGNC:20991"/>
<dbReference type="CTD" id="79632"/>
<dbReference type="DisGeNET" id="79632"/>
<dbReference type="GeneCards" id="FAM184A"/>
<dbReference type="HGNC" id="HGNC:20991">
    <property type="gene designation" value="FAM184A"/>
</dbReference>
<dbReference type="HPA" id="ENSG00000111879">
    <property type="expression patterns" value="Tissue enhanced (placenta)"/>
</dbReference>
<dbReference type="neXtProt" id="NX_Q8NB25"/>
<dbReference type="OpenTargets" id="ENSG00000111879"/>
<dbReference type="PharmGKB" id="PA164719768"/>
<dbReference type="VEuPathDB" id="HostDB:ENSG00000111879"/>
<dbReference type="eggNOG" id="ENOG502R5KC">
    <property type="taxonomic scope" value="Eukaryota"/>
</dbReference>
<dbReference type="GeneTree" id="ENSGT00530000063669"/>
<dbReference type="InParanoid" id="Q8NB25"/>
<dbReference type="OMA" id="MCKKVAQ"/>
<dbReference type="OrthoDB" id="75801at2759"/>
<dbReference type="PAN-GO" id="Q8NB25">
    <property type="GO annotations" value="0 GO annotations based on evolutionary models"/>
</dbReference>
<dbReference type="PhylomeDB" id="Q8NB25"/>
<dbReference type="TreeFam" id="TF316006"/>
<dbReference type="PathwayCommons" id="Q8NB25"/>
<dbReference type="SignaLink" id="Q8NB25"/>
<dbReference type="BioGRID-ORCS" id="79632">
    <property type="hits" value="7 hits in 1156 CRISPR screens"/>
</dbReference>
<dbReference type="ChiTaRS" id="FAM184A">
    <property type="organism name" value="human"/>
</dbReference>
<dbReference type="GenomeRNAi" id="79632"/>
<dbReference type="Pharos" id="Q8NB25">
    <property type="development level" value="Tdark"/>
</dbReference>
<dbReference type="PRO" id="PR:Q8NB25"/>
<dbReference type="Proteomes" id="UP000005640">
    <property type="component" value="Chromosome 6"/>
</dbReference>
<dbReference type="RNAct" id="Q8NB25">
    <property type="molecule type" value="protein"/>
</dbReference>
<dbReference type="Bgee" id="ENSG00000111879">
    <property type="expression patterns" value="Expressed in caudate nucleus and 152 other cell types or tissues"/>
</dbReference>
<dbReference type="ExpressionAtlas" id="Q8NB25">
    <property type="expression patterns" value="baseline and differential"/>
</dbReference>
<dbReference type="GO" id="GO:0034451">
    <property type="term" value="C:centriolar satellite"/>
    <property type="evidence" value="ECO:0000314"/>
    <property type="project" value="HPA"/>
</dbReference>
<dbReference type="GO" id="GO:0036064">
    <property type="term" value="C:ciliary basal body"/>
    <property type="evidence" value="ECO:0000314"/>
    <property type="project" value="HPA"/>
</dbReference>
<dbReference type="GO" id="GO:0005829">
    <property type="term" value="C:cytosol"/>
    <property type="evidence" value="ECO:0000314"/>
    <property type="project" value="HPA"/>
</dbReference>
<dbReference type="GO" id="GO:0005615">
    <property type="term" value="C:extracellular space"/>
    <property type="evidence" value="ECO:0007005"/>
    <property type="project" value="UniProtKB"/>
</dbReference>
<dbReference type="GO" id="GO:0043231">
    <property type="term" value="C:intracellular membrane-bounded organelle"/>
    <property type="evidence" value="ECO:0000314"/>
    <property type="project" value="HPA"/>
</dbReference>
<dbReference type="GO" id="GO:0000932">
    <property type="term" value="C:P-body"/>
    <property type="evidence" value="ECO:0000314"/>
    <property type="project" value="UniProtKB"/>
</dbReference>
<dbReference type="InterPro" id="IPR039478">
    <property type="entry name" value="FAM184A/B_N"/>
</dbReference>
<dbReference type="PANTHER" id="PTHR18870:SF7">
    <property type="entry name" value="PROTEIN FAM184A"/>
    <property type="match status" value="1"/>
</dbReference>
<dbReference type="PANTHER" id="PTHR18870">
    <property type="entry name" value="PROTEIN TAG-278-RELATED"/>
    <property type="match status" value="1"/>
</dbReference>
<dbReference type="Pfam" id="PF15665">
    <property type="entry name" value="FAM184"/>
    <property type="match status" value="1"/>
</dbReference>